<proteinExistence type="inferred from homology"/>
<feature type="chain" id="PRO_1000017838" description="Peptidase T">
    <location>
        <begin position="1"/>
        <end position="410"/>
    </location>
</feature>
<feature type="active site" evidence="1">
    <location>
        <position position="81"/>
    </location>
</feature>
<feature type="active site" description="Proton acceptor" evidence="1">
    <location>
        <position position="176"/>
    </location>
</feature>
<feature type="binding site" evidence="1">
    <location>
        <position position="79"/>
    </location>
    <ligand>
        <name>Zn(2+)</name>
        <dbReference type="ChEBI" id="CHEBI:29105"/>
        <label>1</label>
    </ligand>
</feature>
<feature type="binding site" evidence="1">
    <location>
        <position position="142"/>
    </location>
    <ligand>
        <name>Zn(2+)</name>
        <dbReference type="ChEBI" id="CHEBI:29105"/>
        <label>1</label>
    </ligand>
</feature>
<feature type="binding site" evidence="1">
    <location>
        <position position="142"/>
    </location>
    <ligand>
        <name>Zn(2+)</name>
        <dbReference type="ChEBI" id="CHEBI:29105"/>
        <label>2</label>
    </ligand>
</feature>
<feature type="binding site" evidence="1">
    <location>
        <position position="177"/>
    </location>
    <ligand>
        <name>Zn(2+)</name>
        <dbReference type="ChEBI" id="CHEBI:29105"/>
        <label>2</label>
    </ligand>
</feature>
<feature type="binding site" evidence="1">
    <location>
        <position position="199"/>
    </location>
    <ligand>
        <name>Zn(2+)</name>
        <dbReference type="ChEBI" id="CHEBI:29105"/>
        <label>1</label>
    </ligand>
</feature>
<feature type="binding site" evidence="1">
    <location>
        <position position="381"/>
    </location>
    <ligand>
        <name>Zn(2+)</name>
        <dbReference type="ChEBI" id="CHEBI:29105"/>
        <label>2</label>
    </ligand>
</feature>
<comment type="function">
    <text evidence="1">Cleaves the N-terminal amino acid of tripeptides.</text>
</comment>
<comment type="catalytic activity">
    <reaction evidence="1">
        <text>Release of the N-terminal residue from a tripeptide.</text>
        <dbReference type="EC" id="3.4.11.4"/>
    </reaction>
</comment>
<comment type="cofactor">
    <cofactor evidence="1">
        <name>Zn(2+)</name>
        <dbReference type="ChEBI" id="CHEBI:29105"/>
    </cofactor>
    <text evidence="1">Binds 2 Zn(2+) ions per subunit.</text>
</comment>
<comment type="subcellular location">
    <subcellularLocation>
        <location evidence="1">Cytoplasm</location>
    </subcellularLocation>
</comment>
<comment type="similarity">
    <text evidence="1">Belongs to the peptidase M20B family.</text>
</comment>
<sequence length="410" mass="45867">MKEELIERFTRYVKIDTQSNEDSHTVPTTPGQIEFGKLLVEELKEVGLTEVTMDDNGYVMATLPANTDKDVPVIGFLAHLDTATDFTGKNVKPQIHENFDGNAITLNEELNVVLTPEQFPELPSYKGHTIITTDGTTLLGADDKAGLTEIMVAMNYLIHNPQIKHGKIRVAFTPDEEIGRGPAHFDVEAFGASFAYTMDGGPLGGLEYESFNAAGAKLTFNGTNTHPGTAKNKMRNATKLAMEFNGHLPVEEAPEYTEGYEGFYHLLSLNGDVEQSKAYYIIRDFDRKNFEARKNTIENIVKQMQEKYGQDAVVLEMNDQYYNMLEKIEPVREIVDIAYEAMKSLNIEPNIHPIRGGTDGSQLSYMGLPTPNIFTGGENYHGKFEYVSVDVMEKAVQVIIEIARRFEEQA</sequence>
<evidence type="ECO:0000255" key="1">
    <source>
        <dbReference type="HAMAP-Rule" id="MF_00550"/>
    </source>
</evidence>
<dbReference type="EC" id="3.4.11.4" evidence="1"/>
<dbReference type="EMBL" id="CP000485">
    <property type="protein sequence ID" value="ABK86609.1"/>
    <property type="molecule type" value="Genomic_DNA"/>
</dbReference>
<dbReference type="RefSeq" id="WP_000656979.1">
    <property type="nucleotide sequence ID" value="NC_008600.1"/>
</dbReference>
<dbReference type="SMR" id="A0RHB6"/>
<dbReference type="MEROPS" id="M20.003"/>
<dbReference type="KEGG" id="btl:BALH_3371"/>
<dbReference type="HOGENOM" id="CLU_053676_0_0_9"/>
<dbReference type="GO" id="GO:0005829">
    <property type="term" value="C:cytosol"/>
    <property type="evidence" value="ECO:0007669"/>
    <property type="project" value="TreeGrafter"/>
</dbReference>
<dbReference type="GO" id="GO:0008237">
    <property type="term" value="F:metallopeptidase activity"/>
    <property type="evidence" value="ECO:0007669"/>
    <property type="project" value="UniProtKB-KW"/>
</dbReference>
<dbReference type="GO" id="GO:0045148">
    <property type="term" value="F:tripeptide aminopeptidase activity"/>
    <property type="evidence" value="ECO:0007669"/>
    <property type="project" value="UniProtKB-UniRule"/>
</dbReference>
<dbReference type="GO" id="GO:0008270">
    <property type="term" value="F:zinc ion binding"/>
    <property type="evidence" value="ECO:0007669"/>
    <property type="project" value="UniProtKB-UniRule"/>
</dbReference>
<dbReference type="GO" id="GO:0043171">
    <property type="term" value="P:peptide catabolic process"/>
    <property type="evidence" value="ECO:0007669"/>
    <property type="project" value="UniProtKB-UniRule"/>
</dbReference>
<dbReference type="GO" id="GO:0006508">
    <property type="term" value="P:proteolysis"/>
    <property type="evidence" value="ECO:0007669"/>
    <property type="project" value="UniProtKB-UniRule"/>
</dbReference>
<dbReference type="CDD" id="cd03892">
    <property type="entry name" value="M20_peptT"/>
    <property type="match status" value="1"/>
</dbReference>
<dbReference type="FunFam" id="3.30.70.360:FF:000002">
    <property type="entry name" value="Peptidase T"/>
    <property type="match status" value="1"/>
</dbReference>
<dbReference type="Gene3D" id="3.30.70.360">
    <property type="match status" value="1"/>
</dbReference>
<dbReference type="Gene3D" id="3.40.630.10">
    <property type="entry name" value="Zn peptidases"/>
    <property type="match status" value="1"/>
</dbReference>
<dbReference type="HAMAP" id="MF_00550">
    <property type="entry name" value="Aminopeptidase_M20"/>
    <property type="match status" value="1"/>
</dbReference>
<dbReference type="InterPro" id="IPR001261">
    <property type="entry name" value="ArgE/DapE_CS"/>
</dbReference>
<dbReference type="InterPro" id="IPR036264">
    <property type="entry name" value="Bact_exopeptidase_dim_dom"/>
</dbReference>
<dbReference type="InterPro" id="IPR002933">
    <property type="entry name" value="Peptidase_M20"/>
</dbReference>
<dbReference type="InterPro" id="IPR011650">
    <property type="entry name" value="Peptidase_M20_dimer"/>
</dbReference>
<dbReference type="InterPro" id="IPR010161">
    <property type="entry name" value="Peptidase_M20B"/>
</dbReference>
<dbReference type="NCBIfam" id="TIGR01882">
    <property type="entry name" value="peptidase-T"/>
    <property type="match status" value="1"/>
</dbReference>
<dbReference type="NCBIfam" id="NF003976">
    <property type="entry name" value="PRK05469.1"/>
    <property type="match status" value="1"/>
</dbReference>
<dbReference type="NCBIfam" id="NF009920">
    <property type="entry name" value="PRK13381.1"/>
    <property type="match status" value="1"/>
</dbReference>
<dbReference type="PANTHER" id="PTHR42994">
    <property type="entry name" value="PEPTIDASE T"/>
    <property type="match status" value="1"/>
</dbReference>
<dbReference type="PANTHER" id="PTHR42994:SF1">
    <property type="entry name" value="PEPTIDASE T"/>
    <property type="match status" value="1"/>
</dbReference>
<dbReference type="Pfam" id="PF07687">
    <property type="entry name" value="M20_dimer"/>
    <property type="match status" value="1"/>
</dbReference>
<dbReference type="Pfam" id="PF01546">
    <property type="entry name" value="Peptidase_M20"/>
    <property type="match status" value="1"/>
</dbReference>
<dbReference type="PIRSF" id="PIRSF037215">
    <property type="entry name" value="Peptidase_M20B"/>
    <property type="match status" value="1"/>
</dbReference>
<dbReference type="SUPFAM" id="SSF55031">
    <property type="entry name" value="Bacterial exopeptidase dimerisation domain"/>
    <property type="match status" value="1"/>
</dbReference>
<dbReference type="SUPFAM" id="SSF53187">
    <property type="entry name" value="Zn-dependent exopeptidases"/>
    <property type="match status" value="1"/>
</dbReference>
<dbReference type="PROSITE" id="PS00758">
    <property type="entry name" value="ARGE_DAPE_CPG2_1"/>
    <property type="match status" value="1"/>
</dbReference>
<dbReference type="PROSITE" id="PS00759">
    <property type="entry name" value="ARGE_DAPE_CPG2_2"/>
    <property type="match status" value="1"/>
</dbReference>
<gene>
    <name evidence="1" type="primary">pepT</name>
    <name type="ordered locus">BALH_3371</name>
</gene>
<reference key="1">
    <citation type="journal article" date="2007" name="J. Bacteriol.">
        <title>The complete genome sequence of Bacillus thuringiensis Al Hakam.</title>
        <authorList>
            <person name="Challacombe J.F."/>
            <person name="Altherr M.R."/>
            <person name="Xie G."/>
            <person name="Bhotika S.S."/>
            <person name="Brown N."/>
            <person name="Bruce D."/>
            <person name="Campbell C.S."/>
            <person name="Campbell M.L."/>
            <person name="Chen J."/>
            <person name="Chertkov O."/>
            <person name="Cleland C."/>
            <person name="Dimitrijevic M."/>
            <person name="Doggett N.A."/>
            <person name="Fawcett J.J."/>
            <person name="Glavina T."/>
            <person name="Goodwin L.A."/>
            <person name="Green L.D."/>
            <person name="Han C.S."/>
            <person name="Hill K.K."/>
            <person name="Hitchcock P."/>
            <person name="Jackson P.J."/>
            <person name="Keim P."/>
            <person name="Kewalramani A.R."/>
            <person name="Longmire J."/>
            <person name="Lucas S."/>
            <person name="Malfatti S."/>
            <person name="Martinez D."/>
            <person name="McMurry K."/>
            <person name="Meincke L.J."/>
            <person name="Misra M."/>
            <person name="Moseman B.L."/>
            <person name="Mundt M."/>
            <person name="Munk A.C."/>
            <person name="Okinaka R.T."/>
            <person name="Parson-Quintana B."/>
            <person name="Reilly L.P."/>
            <person name="Richardson P."/>
            <person name="Robinson D.L."/>
            <person name="Saunders E."/>
            <person name="Tapia R."/>
            <person name="Tesmer J.G."/>
            <person name="Thayer N."/>
            <person name="Thompson L.S."/>
            <person name="Tice H."/>
            <person name="Ticknor L.O."/>
            <person name="Wills P.L."/>
            <person name="Gilna P."/>
            <person name="Brettin T.S."/>
        </authorList>
    </citation>
    <scope>NUCLEOTIDE SEQUENCE [LARGE SCALE GENOMIC DNA]</scope>
    <source>
        <strain>Al Hakam</strain>
    </source>
</reference>
<protein>
    <recommendedName>
        <fullName evidence="1">Peptidase T</fullName>
        <ecNumber evidence="1">3.4.11.4</ecNumber>
    </recommendedName>
    <alternativeName>
        <fullName evidence="1">Aminotripeptidase</fullName>
        <shortName evidence="1">Tripeptidase</shortName>
    </alternativeName>
    <alternativeName>
        <fullName evidence="1">Tripeptide aminopeptidase</fullName>
    </alternativeName>
</protein>
<organism>
    <name type="scientific">Bacillus thuringiensis (strain Al Hakam)</name>
    <dbReference type="NCBI Taxonomy" id="412694"/>
    <lineage>
        <taxon>Bacteria</taxon>
        <taxon>Bacillati</taxon>
        <taxon>Bacillota</taxon>
        <taxon>Bacilli</taxon>
        <taxon>Bacillales</taxon>
        <taxon>Bacillaceae</taxon>
        <taxon>Bacillus</taxon>
        <taxon>Bacillus cereus group</taxon>
    </lineage>
</organism>
<name>PEPT_BACAH</name>
<keyword id="KW-0031">Aminopeptidase</keyword>
<keyword id="KW-0963">Cytoplasm</keyword>
<keyword id="KW-0378">Hydrolase</keyword>
<keyword id="KW-0479">Metal-binding</keyword>
<keyword id="KW-0482">Metalloprotease</keyword>
<keyword id="KW-0645">Protease</keyword>
<keyword id="KW-0862">Zinc</keyword>
<accession>A0RHB6</accession>